<comment type="function">
    <text evidence="1">High-affinity uptake of choline driven by a proton-motive force.</text>
</comment>
<comment type="catalytic activity">
    <reaction evidence="1">
        <text>choline(in) + H(+)(in) = choline(out) + H(+)(out)</text>
        <dbReference type="Rhea" id="RHEA:28843"/>
        <dbReference type="ChEBI" id="CHEBI:15354"/>
        <dbReference type="ChEBI" id="CHEBI:15378"/>
    </reaction>
    <physiologicalReaction direction="right-to-left" evidence="1">
        <dbReference type="Rhea" id="RHEA:28845"/>
    </physiologicalReaction>
</comment>
<comment type="pathway">
    <text evidence="1">Amine and polyamine biosynthesis; betaine biosynthesis via choline pathway.</text>
</comment>
<comment type="subcellular location">
    <subcellularLocation>
        <location evidence="1">Cell inner membrane</location>
        <topology evidence="2">Multi-pass membrane protein</topology>
    </subcellularLocation>
</comment>
<comment type="induction">
    <text evidence="1">By osmotic stress. Choline is required for full expression.</text>
</comment>
<comment type="similarity">
    <text evidence="3">Belongs to the BCCT transporter (TC 2.A.15) family.</text>
</comment>
<evidence type="ECO:0000250" key="1">
    <source>
        <dbReference type="UniProtKB" id="P0ABC9"/>
    </source>
</evidence>
<evidence type="ECO:0000255" key="2"/>
<evidence type="ECO:0000305" key="3"/>
<protein>
    <recommendedName>
        <fullName evidence="1">High-affinity choline transport protein</fullName>
    </recommendedName>
</protein>
<dbReference type="EMBL" id="AE005174">
    <property type="protein sequence ID" value="AAG54656.1"/>
    <property type="molecule type" value="Genomic_DNA"/>
</dbReference>
<dbReference type="EMBL" id="BA000007">
    <property type="protein sequence ID" value="BAB33783.1"/>
    <property type="molecule type" value="Genomic_DNA"/>
</dbReference>
<dbReference type="PIR" id="D85524">
    <property type="entry name" value="D85524"/>
</dbReference>
<dbReference type="PIR" id="H90673">
    <property type="entry name" value="H90673"/>
</dbReference>
<dbReference type="RefSeq" id="NP_308387.1">
    <property type="nucleotide sequence ID" value="NC_002695.1"/>
</dbReference>
<dbReference type="RefSeq" id="WP_000131044.1">
    <property type="nucleotide sequence ID" value="NZ_VOAI01000005.1"/>
</dbReference>
<dbReference type="SMR" id="P0ABD0"/>
<dbReference type="STRING" id="155864.Z0401"/>
<dbReference type="GeneID" id="75206484"/>
<dbReference type="GeneID" id="914461"/>
<dbReference type="KEGG" id="ece:Z0401"/>
<dbReference type="KEGG" id="ecs:ECs_0360"/>
<dbReference type="PATRIC" id="fig|386585.9.peg.452"/>
<dbReference type="eggNOG" id="COG1292">
    <property type="taxonomic scope" value="Bacteria"/>
</dbReference>
<dbReference type="HOGENOM" id="CLU_010118_3_1_6"/>
<dbReference type="OMA" id="WAMYALM"/>
<dbReference type="UniPathway" id="UPA00529"/>
<dbReference type="Proteomes" id="UP000000558">
    <property type="component" value="Chromosome"/>
</dbReference>
<dbReference type="Proteomes" id="UP000002519">
    <property type="component" value="Chromosome"/>
</dbReference>
<dbReference type="GO" id="GO:0005886">
    <property type="term" value="C:plasma membrane"/>
    <property type="evidence" value="ECO:0007669"/>
    <property type="project" value="UniProtKB-SubCell"/>
</dbReference>
<dbReference type="GO" id="GO:0022857">
    <property type="term" value="F:transmembrane transporter activity"/>
    <property type="evidence" value="ECO:0007669"/>
    <property type="project" value="InterPro"/>
</dbReference>
<dbReference type="GO" id="GO:0019285">
    <property type="term" value="P:glycine betaine biosynthetic process from choline"/>
    <property type="evidence" value="ECO:0007669"/>
    <property type="project" value="UniProtKB-UniPathway"/>
</dbReference>
<dbReference type="InterPro" id="IPR018093">
    <property type="entry name" value="BCCT_CS"/>
</dbReference>
<dbReference type="InterPro" id="IPR000060">
    <property type="entry name" value="BCCT_transptr"/>
</dbReference>
<dbReference type="NCBIfam" id="TIGR00842">
    <property type="entry name" value="bcct"/>
    <property type="match status" value="1"/>
</dbReference>
<dbReference type="NCBIfam" id="NF007399">
    <property type="entry name" value="PRK09928.1"/>
    <property type="match status" value="1"/>
</dbReference>
<dbReference type="PANTHER" id="PTHR30047:SF7">
    <property type="entry name" value="HIGH-AFFINITY CHOLINE TRANSPORT PROTEIN"/>
    <property type="match status" value="1"/>
</dbReference>
<dbReference type="PANTHER" id="PTHR30047">
    <property type="entry name" value="HIGH-AFFINITY CHOLINE TRANSPORT PROTEIN-RELATED"/>
    <property type="match status" value="1"/>
</dbReference>
<dbReference type="Pfam" id="PF02028">
    <property type="entry name" value="BCCT"/>
    <property type="match status" value="1"/>
</dbReference>
<dbReference type="PROSITE" id="PS01303">
    <property type="entry name" value="BCCT"/>
    <property type="match status" value="1"/>
</dbReference>
<keyword id="KW-0997">Cell inner membrane</keyword>
<keyword id="KW-1003">Cell membrane</keyword>
<keyword id="KW-0472">Membrane</keyword>
<keyword id="KW-1185">Reference proteome</keyword>
<keyword id="KW-0346">Stress response</keyword>
<keyword id="KW-0812">Transmembrane</keyword>
<keyword id="KW-1133">Transmembrane helix</keyword>
<keyword id="KW-0813">Transport</keyword>
<accession>P0ABD0</accession>
<accession>P17447</accession>
<reference key="1">
    <citation type="journal article" date="2001" name="Nature">
        <title>Genome sequence of enterohaemorrhagic Escherichia coli O157:H7.</title>
        <authorList>
            <person name="Perna N.T."/>
            <person name="Plunkett G. III"/>
            <person name="Burland V."/>
            <person name="Mau B."/>
            <person name="Glasner J.D."/>
            <person name="Rose D.J."/>
            <person name="Mayhew G.F."/>
            <person name="Evans P.S."/>
            <person name="Gregor J."/>
            <person name="Kirkpatrick H.A."/>
            <person name="Posfai G."/>
            <person name="Hackett J."/>
            <person name="Klink S."/>
            <person name="Boutin A."/>
            <person name="Shao Y."/>
            <person name="Miller L."/>
            <person name="Grotbeck E.J."/>
            <person name="Davis N.W."/>
            <person name="Lim A."/>
            <person name="Dimalanta E.T."/>
            <person name="Potamousis K."/>
            <person name="Apodaca J."/>
            <person name="Anantharaman T.S."/>
            <person name="Lin J."/>
            <person name="Yen G."/>
            <person name="Schwartz D.C."/>
            <person name="Welch R.A."/>
            <person name="Blattner F.R."/>
        </authorList>
    </citation>
    <scope>NUCLEOTIDE SEQUENCE [LARGE SCALE GENOMIC DNA]</scope>
    <source>
        <strain>O157:H7 / EDL933 / ATCC 700927 / EHEC</strain>
    </source>
</reference>
<reference key="2">
    <citation type="journal article" date="2001" name="DNA Res.">
        <title>Complete genome sequence of enterohemorrhagic Escherichia coli O157:H7 and genomic comparison with a laboratory strain K-12.</title>
        <authorList>
            <person name="Hayashi T."/>
            <person name="Makino K."/>
            <person name="Ohnishi M."/>
            <person name="Kurokawa K."/>
            <person name="Ishii K."/>
            <person name="Yokoyama K."/>
            <person name="Han C.-G."/>
            <person name="Ohtsubo E."/>
            <person name="Nakayama K."/>
            <person name="Murata T."/>
            <person name="Tanaka M."/>
            <person name="Tobe T."/>
            <person name="Iida T."/>
            <person name="Takami H."/>
            <person name="Honda T."/>
            <person name="Sasakawa C."/>
            <person name="Ogasawara N."/>
            <person name="Yasunaga T."/>
            <person name="Kuhara S."/>
            <person name="Shiba T."/>
            <person name="Hattori M."/>
            <person name="Shinagawa H."/>
        </authorList>
    </citation>
    <scope>NUCLEOTIDE SEQUENCE [LARGE SCALE GENOMIC DNA]</scope>
    <source>
        <strain>O157:H7 / Sakai / RIMD 0509952 / EHEC</strain>
    </source>
</reference>
<proteinExistence type="inferred from homology"/>
<feature type="chain" id="PRO_0000201485" description="High-affinity choline transport protein">
    <location>
        <begin position="1"/>
        <end position="677"/>
    </location>
</feature>
<feature type="transmembrane region" description="Helical" evidence="2">
    <location>
        <begin position="15"/>
        <end position="35"/>
    </location>
</feature>
<feature type="transmembrane region" description="Helical" evidence="2">
    <location>
        <begin position="54"/>
        <end position="74"/>
    </location>
</feature>
<feature type="transmembrane region" description="Helical" evidence="2">
    <location>
        <begin position="94"/>
        <end position="114"/>
    </location>
</feature>
<feature type="transmembrane region" description="Helical" evidence="2">
    <location>
        <begin position="144"/>
        <end position="164"/>
    </location>
</feature>
<feature type="transmembrane region" description="Helical" evidence="2">
    <location>
        <begin position="196"/>
        <end position="216"/>
    </location>
</feature>
<feature type="transmembrane region" description="Helical" evidence="2">
    <location>
        <begin position="233"/>
        <end position="253"/>
    </location>
</feature>
<feature type="transmembrane region" description="Helical" evidence="2">
    <location>
        <begin position="265"/>
        <end position="285"/>
    </location>
</feature>
<feature type="transmembrane region" description="Helical" evidence="2">
    <location>
        <begin position="319"/>
        <end position="339"/>
    </location>
</feature>
<feature type="transmembrane region" description="Helical" evidence="2">
    <location>
        <begin position="350"/>
        <end position="370"/>
    </location>
</feature>
<feature type="transmembrane region" description="Helical" evidence="2">
    <location>
        <begin position="412"/>
        <end position="432"/>
    </location>
</feature>
<feature type="transmembrane region" description="Helical" evidence="2">
    <location>
        <begin position="452"/>
        <end position="472"/>
    </location>
</feature>
<feature type="transmembrane region" description="Helical" evidence="2">
    <location>
        <begin position="477"/>
        <end position="497"/>
    </location>
</feature>
<gene>
    <name type="primary">betT</name>
    <name type="ordered locus">Z0401</name>
    <name type="ordered locus">ECs0360</name>
</gene>
<sequence>MTDLSHSREKDKINPVVFYTSAGLILLFSLTTILFRDFSALWIGRTLDWVSKTFGWYYLLAATLYIVFVVCIACSRFGSVKLGPEQSKPEFSLLSWAAMLFAAGIGIDLMFFSVAEPVTQYMQPPEGAGQTIEAARQAMVWTLFHYGLTGWSMYALMGMALGYFSYRYNLPLTIRSALYPIFGKRINGPIGHSVDIAAVIGTIFGIATTLGIGVVQLNYGLSVLFDIPDSMAAKAALIALSVIIATISVTSGVDKGIRVLSELNVALALGLILFVLFMGDTSFLLNALVLNVGDYVNRFMGMTLNSFAFDRPVEWMNNWTLFFWAWWVAWSPFVGLFLARISRGRTIRQFVLGTLIIPFTFTLLWLSVFGNSALYEIIHGGAAFAEEAMVHPERGFYSLLAQYPAFTFSASVATITGLLFYVTSADSGALVLGNFTSQLKDINSDAPGWLRVFWSVAIGLLTLGMLMTNGISALQNTTVIMGLPFSFVIFFVMAGLYKSLKVEDYRRESANRDTAPRPLGLQDRLSWKKRLSRLMNYPGTRYTKQMMETVCYPAMEEVAQELRLRGAYVELKSLPPEEGQQLGHLDLLVHMGEEQNFVYQIWPQQYSVPGFTYRARSGKSTYYRLETFLLEGSQGNDLMDYSKEQVITDILDQYERHLNFIHLHREAPGHSVMFPDA</sequence>
<name>BETT_ECO57</name>
<organism>
    <name type="scientific">Escherichia coli O157:H7</name>
    <dbReference type="NCBI Taxonomy" id="83334"/>
    <lineage>
        <taxon>Bacteria</taxon>
        <taxon>Pseudomonadati</taxon>
        <taxon>Pseudomonadota</taxon>
        <taxon>Gammaproteobacteria</taxon>
        <taxon>Enterobacterales</taxon>
        <taxon>Enterobacteriaceae</taxon>
        <taxon>Escherichia</taxon>
    </lineage>
</organism>